<name>SPS1_YEAST</name>
<keyword id="KW-0067">ATP-binding</keyword>
<keyword id="KW-0963">Cytoplasm</keyword>
<keyword id="KW-0418">Kinase</keyword>
<keyword id="KW-0469">Meiosis</keyword>
<keyword id="KW-0547">Nucleotide-binding</keyword>
<keyword id="KW-0539">Nucleus</keyword>
<keyword id="KW-1185">Reference proteome</keyword>
<keyword id="KW-0723">Serine/threonine-protein kinase</keyword>
<keyword id="KW-0749">Sporulation</keyword>
<keyword id="KW-0808">Transferase</keyword>
<evidence type="ECO:0000255" key="1">
    <source>
        <dbReference type="PROSITE-ProRule" id="PRU00159"/>
    </source>
</evidence>
<evidence type="ECO:0000269" key="2">
    <source>
    </source>
</evidence>
<evidence type="ECO:0000269" key="3">
    <source>
    </source>
</evidence>
<evidence type="ECO:0000305" key="4"/>
<protein>
    <recommendedName>
        <fullName>Sporulation-specific protein 1</fullName>
        <ecNumber>2.7.11.1</ecNumber>
    </recommendedName>
</protein>
<sequence length="490" mass="55704">MESKEISIRSRTPPSKLYSIQSCIGRGNFGDVYKAVDRVTQEIVAIKVVNLEHSDEDIELLAQEIFFLAELKSPLITNYIATMLEDVSMWIVMEYCGGGSCSDLLKRSYVNGLPEEKVSFIIHEVTLGLKYLHEQRKIHRDIKAANILLNEEGMVKLGDFGVSGHIRSTLKRDTFVGTPYWMAPEVVCCEVDGYNEKADIWSLGITTYELLKGLPPLSKYDPMKVMTNLPKRKPPKLQGPFSDAAKDFVAGCLVKTPADRPSAYNLLSFEFVKNITITNLKSDVDLIKQKKVQERYTKVPKYPLQNRLYKNSNTVRGKEFWNFESTRLSTTQISKEELSPITQDSPTSSLNMESPYLLHGQTVTPITNPSSSSFRKCTQPVFELDSGMDIDSGCPNAQAETEIVPLSNHNKKHKKNDIQALKIEKFDYLKNIVSHILNRMYDRARDDETRKYVNEMLKQFIKTEANVPGFNEVFIEEISLRIEAIKKGFV</sequence>
<proteinExistence type="evidence at protein level"/>
<feature type="chain" id="PRO_0000086679" description="Sporulation-specific protein 1">
    <location>
        <begin position="1"/>
        <end position="490"/>
    </location>
</feature>
<feature type="domain" description="Protein kinase" evidence="1">
    <location>
        <begin position="18"/>
        <end position="272"/>
    </location>
</feature>
<feature type="active site" description="Proton acceptor" evidence="1">
    <location>
        <position position="141"/>
    </location>
</feature>
<feature type="binding site" evidence="1">
    <location>
        <begin position="24"/>
        <end position="32"/>
    </location>
    <ligand>
        <name>ATP</name>
        <dbReference type="ChEBI" id="CHEBI:30616"/>
    </ligand>
</feature>
<feature type="binding site" evidence="1">
    <location>
        <position position="47"/>
    </location>
    <ligand>
        <name>ATP</name>
        <dbReference type="ChEBI" id="CHEBI:30616"/>
    </ligand>
</feature>
<feature type="sequence conflict" description="In Ref. 2." evidence="4" ref="2">
    <original>N</original>
    <variation>NVN</variation>
    <location>
        <position position="454"/>
    </location>
</feature>
<feature type="sequence conflict" description="In Ref. 2; AAA35079." evidence="4" ref="2">
    <original>G</original>
    <variation>R</variation>
    <location>
        <position position="469"/>
    </location>
</feature>
<organism>
    <name type="scientific">Saccharomyces cerevisiae (strain ATCC 204508 / S288c)</name>
    <name type="common">Baker's yeast</name>
    <dbReference type="NCBI Taxonomy" id="559292"/>
    <lineage>
        <taxon>Eukaryota</taxon>
        <taxon>Fungi</taxon>
        <taxon>Dikarya</taxon>
        <taxon>Ascomycota</taxon>
        <taxon>Saccharomycotina</taxon>
        <taxon>Saccharomycetes</taxon>
        <taxon>Saccharomycetales</taxon>
        <taxon>Saccharomycetaceae</taxon>
        <taxon>Saccharomyces</taxon>
    </lineage>
</organism>
<dbReference type="EC" id="2.7.11.1"/>
<dbReference type="EMBL" id="U13018">
    <property type="protein sequence ID" value="AAA64833.1"/>
    <property type="molecule type" value="Genomic_DNA"/>
</dbReference>
<dbReference type="EMBL" id="U33057">
    <property type="protein sequence ID" value="AAB64963.1"/>
    <property type="molecule type" value="Genomic_DNA"/>
</dbReference>
<dbReference type="EMBL" id="M13629">
    <property type="protein sequence ID" value="AAA35079.1"/>
    <property type="molecule type" value="Genomic_DNA"/>
</dbReference>
<dbReference type="EMBL" id="BK006938">
    <property type="protein sequence ID" value="DAA12353.1"/>
    <property type="molecule type" value="Genomic_DNA"/>
</dbReference>
<dbReference type="PIR" id="A55162">
    <property type="entry name" value="S47946"/>
</dbReference>
<dbReference type="RefSeq" id="NP_010811.1">
    <property type="nucleotide sequence ID" value="NM_001180831.1"/>
</dbReference>
<dbReference type="SMR" id="P08458"/>
<dbReference type="BioGRID" id="32573">
    <property type="interactions" value="109"/>
</dbReference>
<dbReference type="DIP" id="DIP-6598N"/>
<dbReference type="FunCoup" id="P08458">
    <property type="interactions" value="988"/>
</dbReference>
<dbReference type="IntAct" id="P08458">
    <property type="interactions" value="47"/>
</dbReference>
<dbReference type="MINT" id="P08458"/>
<dbReference type="STRING" id="4932.YDR523C"/>
<dbReference type="iPTMnet" id="P08458"/>
<dbReference type="PaxDb" id="4932-YDR523C"/>
<dbReference type="PeptideAtlas" id="P08458"/>
<dbReference type="EnsemblFungi" id="YDR523C_mRNA">
    <property type="protein sequence ID" value="YDR523C"/>
    <property type="gene ID" value="YDR523C"/>
</dbReference>
<dbReference type="GeneID" id="852135"/>
<dbReference type="KEGG" id="sce:YDR523C"/>
<dbReference type="AGR" id="SGD:S000002931"/>
<dbReference type="SGD" id="S000002931">
    <property type="gene designation" value="SPS1"/>
</dbReference>
<dbReference type="VEuPathDB" id="FungiDB:YDR523C"/>
<dbReference type="eggNOG" id="KOG0201">
    <property type="taxonomic scope" value="Eukaryota"/>
</dbReference>
<dbReference type="GeneTree" id="ENSGT00940000176215"/>
<dbReference type="HOGENOM" id="CLU_000288_63_23_1"/>
<dbReference type="InParanoid" id="P08458"/>
<dbReference type="OMA" id="DVSMWIV"/>
<dbReference type="OrthoDB" id="248923at2759"/>
<dbReference type="BioCyc" id="YEAST:G3O-30039-MONOMER"/>
<dbReference type="BRENDA" id="2.7.11.1">
    <property type="organism ID" value="984"/>
</dbReference>
<dbReference type="Reactome" id="R-SCE-383280">
    <property type="pathway name" value="Nuclear Receptor transcription pathway"/>
</dbReference>
<dbReference type="BioGRID-ORCS" id="852135">
    <property type="hits" value="0 hits in 13 CRISPR screens"/>
</dbReference>
<dbReference type="PRO" id="PR:P08458"/>
<dbReference type="Proteomes" id="UP000002311">
    <property type="component" value="Chromosome IV"/>
</dbReference>
<dbReference type="RNAct" id="P08458">
    <property type="molecule type" value="protein"/>
</dbReference>
<dbReference type="GO" id="GO:0005737">
    <property type="term" value="C:cytoplasm"/>
    <property type="evidence" value="ECO:0000314"/>
    <property type="project" value="SGD"/>
</dbReference>
<dbReference type="GO" id="GO:0005634">
    <property type="term" value="C:nucleus"/>
    <property type="evidence" value="ECO:0000314"/>
    <property type="project" value="SGD"/>
</dbReference>
<dbReference type="GO" id="GO:0005628">
    <property type="term" value="C:prospore membrane"/>
    <property type="evidence" value="ECO:0000314"/>
    <property type="project" value="SGD"/>
</dbReference>
<dbReference type="GO" id="GO:0005524">
    <property type="term" value="F:ATP binding"/>
    <property type="evidence" value="ECO:0007669"/>
    <property type="project" value="UniProtKB-KW"/>
</dbReference>
<dbReference type="GO" id="GO:0004672">
    <property type="term" value="F:protein kinase activity"/>
    <property type="evidence" value="ECO:0007005"/>
    <property type="project" value="SGD"/>
</dbReference>
<dbReference type="GO" id="GO:0106310">
    <property type="term" value="F:protein serine kinase activity"/>
    <property type="evidence" value="ECO:0007669"/>
    <property type="project" value="RHEA"/>
</dbReference>
<dbReference type="GO" id="GO:0004674">
    <property type="term" value="F:protein serine/threonine kinase activity"/>
    <property type="evidence" value="ECO:0000318"/>
    <property type="project" value="GO_Central"/>
</dbReference>
<dbReference type="GO" id="GO:0030437">
    <property type="term" value="P:ascospore formation"/>
    <property type="evidence" value="ECO:0000315"/>
    <property type="project" value="SGD"/>
</dbReference>
<dbReference type="GO" id="GO:0030476">
    <property type="term" value="P:ascospore wall assembly"/>
    <property type="evidence" value="ECO:0000315"/>
    <property type="project" value="SGD"/>
</dbReference>
<dbReference type="GO" id="GO:0051229">
    <property type="term" value="P:meiotic spindle disassembly"/>
    <property type="evidence" value="ECO:0000315"/>
    <property type="project" value="SGD"/>
</dbReference>
<dbReference type="GO" id="GO:1904750">
    <property type="term" value="P:negative regulation of protein localization to nucleolus"/>
    <property type="evidence" value="ECO:0000315"/>
    <property type="project" value="SGD"/>
</dbReference>
<dbReference type="GO" id="GO:1903024">
    <property type="term" value="P:positive regulation of ascospore-type prospore membrane formation"/>
    <property type="evidence" value="ECO:0000315"/>
    <property type="project" value="SGD"/>
</dbReference>
<dbReference type="CDD" id="cd06609">
    <property type="entry name" value="STKc_MST3_like"/>
    <property type="match status" value="1"/>
</dbReference>
<dbReference type="FunFam" id="1.10.510.10:FF:000499">
    <property type="entry name" value="Serine/threonine-protein kinase KIC1"/>
    <property type="match status" value="1"/>
</dbReference>
<dbReference type="Gene3D" id="1.10.510.10">
    <property type="entry name" value="Transferase(Phosphotransferase) domain 1"/>
    <property type="match status" value="1"/>
</dbReference>
<dbReference type="InterPro" id="IPR011009">
    <property type="entry name" value="Kinase-like_dom_sf"/>
</dbReference>
<dbReference type="InterPro" id="IPR000719">
    <property type="entry name" value="Prot_kinase_dom"/>
</dbReference>
<dbReference type="InterPro" id="IPR017441">
    <property type="entry name" value="Protein_kinase_ATP_BS"/>
</dbReference>
<dbReference type="InterPro" id="IPR050629">
    <property type="entry name" value="STE20/SPS1-PAK"/>
</dbReference>
<dbReference type="PANTHER" id="PTHR48012:SF10">
    <property type="entry name" value="FI20177P1"/>
    <property type="match status" value="1"/>
</dbReference>
<dbReference type="PANTHER" id="PTHR48012">
    <property type="entry name" value="STERILE20-LIKE KINASE, ISOFORM B-RELATED"/>
    <property type="match status" value="1"/>
</dbReference>
<dbReference type="Pfam" id="PF00069">
    <property type="entry name" value="Pkinase"/>
    <property type="match status" value="1"/>
</dbReference>
<dbReference type="SMART" id="SM00220">
    <property type="entry name" value="S_TKc"/>
    <property type="match status" value="1"/>
</dbReference>
<dbReference type="SUPFAM" id="SSF56112">
    <property type="entry name" value="Protein kinase-like (PK-like)"/>
    <property type="match status" value="1"/>
</dbReference>
<dbReference type="PROSITE" id="PS00107">
    <property type="entry name" value="PROTEIN_KINASE_ATP"/>
    <property type="match status" value="1"/>
</dbReference>
<dbReference type="PROSITE" id="PS50011">
    <property type="entry name" value="PROTEIN_KINASE_DOM"/>
    <property type="match status" value="1"/>
</dbReference>
<gene>
    <name type="primary">SPS1</name>
    <name type="ordered locus">YDR523C</name>
    <name type="ORF">D9719.27</name>
</gene>
<reference key="1">
    <citation type="journal article" date="1994" name="Genes Dev.">
        <title>Mutation of the SPS1-encoded protein kinase of Saccharomyces cerevisiae leads to defects in transcription and morphology during spore formation.</title>
        <authorList>
            <person name="Friesen H."/>
            <person name="Lunz R."/>
            <person name="Doyle S."/>
            <person name="Segall J."/>
        </authorList>
    </citation>
    <scope>NUCLEOTIDE SEQUENCE [GENOMIC DNA]</scope>
    <scope>FUNCTION</scope>
</reference>
<reference key="2">
    <citation type="journal article" date="1997" name="Nature">
        <title>The nucleotide sequence of Saccharomyces cerevisiae chromosome IV.</title>
        <authorList>
            <person name="Jacq C."/>
            <person name="Alt-Moerbe J."/>
            <person name="Andre B."/>
            <person name="Arnold W."/>
            <person name="Bahr A."/>
            <person name="Ballesta J.P.G."/>
            <person name="Bargues M."/>
            <person name="Baron L."/>
            <person name="Becker A."/>
            <person name="Biteau N."/>
            <person name="Bloecker H."/>
            <person name="Blugeon C."/>
            <person name="Boskovic J."/>
            <person name="Brandt P."/>
            <person name="Brueckner M."/>
            <person name="Buitrago M.J."/>
            <person name="Coster F."/>
            <person name="Delaveau T."/>
            <person name="del Rey F."/>
            <person name="Dujon B."/>
            <person name="Eide L.G."/>
            <person name="Garcia-Cantalejo J.M."/>
            <person name="Goffeau A."/>
            <person name="Gomez-Peris A."/>
            <person name="Granotier C."/>
            <person name="Hanemann V."/>
            <person name="Hankeln T."/>
            <person name="Hoheisel J.D."/>
            <person name="Jaeger W."/>
            <person name="Jimenez A."/>
            <person name="Jonniaux J.-L."/>
            <person name="Kraemer C."/>
            <person name="Kuester H."/>
            <person name="Laamanen P."/>
            <person name="Legros Y."/>
            <person name="Louis E.J."/>
            <person name="Moeller-Rieker S."/>
            <person name="Monnet A."/>
            <person name="Moro M."/>
            <person name="Mueller-Auer S."/>
            <person name="Nussbaumer B."/>
            <person name="Paricio N."/>
            <person name="Paulin L."/>
            <person name="Perea J."/>
            <person name="Perez-Alonso M."/>
            <person name="Perez-Ortin J.E."/>
            <person name="Pohl T.M."/>
            <person name="Prydz H."/>
            <person name="Purnelle B."/>
            <person name="Rasmussen S.W."/>
            <person name="Remacha M.A."/>
            <person name="Revuelta J.L."/>
            <person name="Rieger M."/>
            <person name="Salom D."/>
            <person name="Saluz H.P."/>
            <person name="Saiz J.E."/>
            <person name="Saren A.-M."/>
            <person name="Schaefer M."/>
            <person name="Scharfe M."/>
            <person name="Schmidt E.R."/>
            <person name="Schneider C."/>
            <person name="Scholler P."/>
            <person name="Schwarz S."/>
            <person name="Soler-Mira A."/>
            <person name="Urrestarazu L.A."/>
            <person name="Verhasselt P."/>
            <person name="Vissers S."/>
            <person name="Voet M."/>
            <person name="Volckaert G."/>
            <person name="Wagner G."/>
            <person name="Wambutt R."/>
            <person name="Wedler E."/>
            <person name="Wedler H."/>
            <person name="Woelfl S."/>
            <person name="Harris D.E."/>
            <person name="Bowman S."/>
            <person name="Brown D."/>
            <person name="Churcher C.M."/>
            <person name="Connor R."/>
            <person name="Dedman K."/>
            <person name="Gentles S."/>
            <person name="Hamlin N."/>
            <person name="Hunt S."/>
            <person name="Jones L."/>
            <person name="McDonald S."/>
            <person name="Murphy L.D."/>
            <person name="Niblett D."/>
            <person name="Odell C."/>
            <person name="Oliver K."/>
            <person name="Rajandream M.A."/>
            <person name="Richards C."/>
            <person name="Shore L."/>
            <person name="Walsh S.V."/>
            <person name="Barrell B.G."/>
            <person name="Dietrich F.S."/>
            <person name="Mulligan J.T."/>
            <person name="Allen E."/>
            <person name="Araujo R."/>
            <person name="Aviles E."/>
            <person name="Berno A."/>
            <person name="Carpenter J."/>
            <person name="Chen E."/>
            <person name="Cherry J.M."/>
            <person name="Chung E."/>
            <person name="Duncan M."/>
            <person name="Hunicke-Smith S."/>
            <person name="Hyman R.W."/>
            <person name="Komp C."/>
            <person name="Lashkari D."/>
            <person name="Lew H."/>
            <person name="Lin D."/>
            <person name="Mosedale D."/>
            <person name="Nakahara K."/>
            <person name="Namath A."/>
            <person name="Oefner P."/>
            <person name="Oh C."/>
            <person name="Petel F.X."/>
            <person name="Roberts D."/>
            <person name="Schramm S."/>
            <person name="Schroeder M."/>
            <person name="Shogren T."/>
            <person name="Shroff N."/>
            <person name="Winant A."/>
            <person name="Yelton M.A."/>
            <person name="Botstein D."/>
            <person name="Davis R.W."/>
            <person name="Johnston M."/>
            <person name="Andrews S."/>
            <person name="Brinkman R."/>
            <person name="Cooper J."/>
            <person name="Ding H."/>
            <person name="Du Z."/>
            <person name="Favello A."/>
            <person name="Fulton L."/>
            <person name="Gattung S."/>
            <person name="Greco T."/>
            <person name="Hallsworth K."/>
            <person name="Hawkins J."/>
            <person name="Hillier L.W."/>
            <person name="Jier M."/>
            <person name="Johnson D."/>
            <person name="Johnston L."/>
            <person name="Kirsten J."/>
            <person name="Kucaba T."/>
            <person name="Langston Y."/>
            <person name="Latreille P."/>
            <person name="Le T."/>
            <person name="Mardis E."/>
            <person name="Menezes S."/>
            <person name="Miller N."/>
            <person name="Nhan M."/>
            <person name="Pauley A."/>
            <person name="Peluso D."/>
            <person name="Rifkin L."/>
            <person name="Riles L."/>
            <person name="Taich A."/>
            <person name="Trevaskis E."/>
            <person name="Vignati D."/>
            <person name="Wilcox L."/>
            <person name="Wohldman P."/>
            <person name="Vaudin M."/>
            <person name="Wilson R."/>
            <person name="Waterston R."/>
            <person name="Albermann K."/>
            <person name="Hani J."/>
            <person name="Heumann K."/>
            <person name="Kleine K."/>
            <person name="Mewes H.-W."/>
            <person name="Zollner A."/>
            <person name="Zaccaria P."/>
        </authorList>
    </citation>
    <scope>NUCLEOTIDE SEQUENCE [LARGE SCALE GENOMIC DNA]</scope>
    <source>
        <strain>ATCC 204508 / S288c</strain>
    </source>
</reference>
<reference key="3">
    <citation type="journal article" date="2014" name="G3 (Bethesda)">
        <title>The reference genome sequence of Saccharomyces cerevisiae: Then and now.</title>
        <authorList>
            <person name="Engel S.R."/>
            <person name="Dietrich F.S."/>
            <person name="Fisk D.G."/>
            <person name="Binkley G."/>
            <person name="Balakrishnan R."/>
            <person name="Costanzo M.C."/>
            <person name="Dwight S.S."/>
            <person name="Hitz B.C."/>
            <person name="Karra K."/>
            <person name="Nash R.S."/>
            <person name="Weng S."/>
            <person name="Wong E.D."/>
            <person name="Lloyd P."/>
            <person name="Skrzypek M.S."/>
            <person name="Miyasato S.R."/>
            <person name="Simison M."/>
            <person name="Cherry J.M."/>
        </authorList>
    </citation>
    <scope>GENOME REANNOTATION</scope>
    <source>
        <strain>ATCC 204508 / S288c</strain>
    </source>
</reference>
<reference key="4">
    <citation type="journal article" date="1986" name="Mol. Cell. Biol.">
        <title>Characterization and mutational analysis of a cluster of three genes expressed preferentially during sporulation of Saccharomyces cerevisiae.</title>
        <authorList>
            <person name="Percival-Smith A."/>
            <person name="Segall J."/>
        </authorList>
    </citation>
    <scope>NUCLEOTIDE SEQUENCE [GENOMIC DNA] OF 396-490</scope>
</reference>
<reference key="5">
    <citation type="journal article" date="2003" name="Nature">
        <title>Global analysis of protein localization in budding yeast.</title>
        <authorList>
            <person name="Huh W.-K."/>
            <person name="Falvo J.V."/>
            <person name="Gerke L.C."/>
            <person name="Carroll A.S."/>
            <person name="Howson R.W."/>
            <person name="Weissman J.S."/>
            <person name="O'Shea E.K."/>
        </authorList>
    </citation>
    <scope>SUBCELLULAR LOCATION [LARGE SCALE ANALYSIS]</scope>
</reference>
<accession>P08458</accession>
<accession>D6VTE3</accession>
<comment type="function">
    <text evidence="3">Serine/threonine protein kinase required for spore wall development.</text>
</comment>
<comment type="catalytic activity">
    <reaction>
        <text>L-seryl-[protein] + ATP = O-phospho-L-seryl-[protein] + ADP + H(+)</text>
        <dbReference type="Rhea" id="RHEA:17989"/>
        <dbReference type="Rhea" id="RHEA-COMP:9863"/>
        <dbReference type="Rhea" id="RHEA-COMP:11604"/>
        <dbReference type="ChEBI" id="CHEBI:15378"/>
        <dbReference type="ChEBI" id="CHEBI:29999"/>
        <dbReference type="ChEBI" id="CHEBI:30616"/>
        <dbReference type="ChEBI" id="CHEBI:83421"/>
        <dbReference type="ChEBI" id="CHEBI:456216"/>
        <dbReference type="EC" id="2.7.11.1"/>
    </reaction>
</comment>
<comment type="catalytic activity">
    <reaction>
        <text>L-threonyl-[protein] + ATP = O-phospho-L-threonyl-[protein] + ADP + H(+)</text>
        <dbReference type="Rhea" id="RHEA:46608"/>
        <dbReference type="Rhea" id="RHEA-COMP:11060"/>
        <dbReference type="Rhea" id="RHEA-COMP:11605"/>
        <dbReference type="ChEBI" id="CHEBI:15378"/>
        <dbReference type="ChEBI" id="CHEBI:30013"/>
        <dbReference type="ChEBI" id="CHEBI:30616"/>
        <dbReference type="ChEBI" id="CHEBI:61977"/>
        <dbReference type="ChEBI" id="CHEBI:456216"/>
        <dbReference type="EC" id="2.7.11.1"/>
    </reaction>
</comment>
<comment type="subcellular location">
    <subcellularLocation>
        <location evidence="2">Nucleus</location>
    </subcellularLocation>
    <subcellularLocation>
        <location evidence="2">Cytoplasm</location>
    </subcellularLocation>
</comment>
<comment type="similarity">
    <text evidence="4">Belongs to the protein kinase superfamily. STE Ser/Thr protein kinase family. STE20 subfamily.</text>
</comment>